<feature type="signal peptide" evidence="1">
    <location>
        <begin position="1"/>
        <end position="19"/>
    </location>
</feature>
<feature type="chain" id="PRO_1000088267" description="Membrane protein insertase YidC">
    <location>
        <begin position="20"/>
        <end position="290"/>
    </location>
</feature>
<feature type="transmembrane region" description="Helical" evidence="1">
    <location>
        <begin position="56"/>
        <end position="76"/>
    </location>
</feature>
<feature type="transmembrane region" description="Helical" evidence="1">
    <location>
        <begin position="134"/>
        <end position="154"/>
    </location>
</feature>
<feature type="transmembrane region" description="Helical" evidence="1">
    <location>
        <begin position="176"/>
        <end position="196"/>
    </location>
</feature>
<feature type="transmembrane region" description="Helical" evidence="1">
    <location>
        <begin position="207"/>
        <end position="224"/>
    </location>
</feature>
<feature type="transmembrane region" description="Helical" evidence="1">
    <location>
        <begin position="229"/>
        <end position="251"/>
    </location>
</feature>
<feature type="region of interest" description="Disordered" evidence="2">
    <location>
        <begin position="270"/>
        <end position="290"/>
    </location>
</feature>
<feature type="lipid moiety-binding region" description="N-palmitoyl cysteine" evidence="1">
    <location>
        <position position="20"/>
    </location>
</feature>
<feature type="lipid moiety-binding region" description="S-diacylglycerol cysteine" evidence="1">
    <location>
        <position position="20"/>
    </location>
</feature>
<keyword id="KW-1003">Cell membrane</keyword>
<keyword id="KW-0143">Chaperone</keyword>
<keyword id="KW-0449">Lipoprotein</keyword>
<keyword id="KW-0472">Membrane</keyword>
<keyword id="KW-0564">Palmitate</keyword>
<keyword id="KW-0653">Protein transport</keyword>
<keyword id="KW-0732">Signal</keyword>
<keyword id="KW-0812">Transmembrane</keyword>
<keyword id="KW-1133">Transmembrane helix</keyword>
<keyword id="KW-0813">Transport</keyword>
<evidence type="ECO:0000255" key="1">
    <source>
        <dbReference type="HAMAP-Rule" id="MF_01811"/>
    </source>
</evidence>
<evidence type="ECO:0000256" key="2">
    <source>
        <dbReference type="SAM" id="MobiDB-lite"/>
    </source>
</evidence>
<organism>
    <name type="scientific">Staphylococcus aureus (strain Mu3 / ATCC 700698)</name>
    <dbReference type="NCBI Taxonomy" id="418127"/>
    <lineage>
        <taxon>Bacteria</taxon>
        <taxon>Bacillati</taxon>
        <taxon>Bacillota</taxon>
        <taxon>Bacilli</taxon>
        <taxon>Bacillales</taxon>
        <taxon>Staphylococcaceae</taxon>
        <taxon>Staphylococcus</taxon>
    </lineage>
</organism>
<reference key="1">
    <citation type="journal article" date="2008" name="Antimicrob. Agents Chemother.">
        <title>Mutated response regulator graR is responsible for phenotypic conversion of Staphylococcus aureus from heterogeneous vancomycin-intermediate resistance to vancomycin-intermediate resistance.</title>
        <authorList>
            <person name="Neoh H.-M."/>
            <person name="Cui L."/>
            <person name="Yuzawa H."/>
            <person name="Takeuchi F."/>
            <person name="Matsuo M."/>
            <person name="Hiramatsu K."/>
        </authorList>
    </citation>
    <scope>NUCLEOTIDE SEQUENCE [LARGE SCALE GENOMIC DNA]</scope>
    <source>
        <strain>Mu3 / ATCC 700698</strain>
    </source>
</reference>
<dbReference type="EMBL" id="AP009324">
    <property type="protein sequence ID" value="BAF78958.1"/>
    <property type="molecule type" value="Genomic_DNA"/>
</dbReference>
<dbReference type="RefSeq" id="WP_000725802.1">
    <property type="nucleotide sequence ID" value="NZ_CTYB01000015.1"/>
</dbReference>
<dbReference type="SMR" id="A7X4S6"/>
<dbReference type="KEGG" id="saw:SAHV_2075"/>
<dbReference type="HOGENOM" id="CLU_036138_5_2_9"/>
<dbReference type="GO" id="GO:0005886">
    <property type="term" value="C:plasma membrane"/>
    <property type="evidence" value="ECO:0007669"/>
    <property type="project" value="UniProtKB-SubCell"/>
</dbReference>
<dbReference type="GO" id="GO:0032977">
    <property type="term" value="F:membrane insertase activity"/>
    <property type="evidence" value="ECO:0007669"/>
    <property type="project" value="InterPro"/>
</dbReference>
<dbReference type="GO" id="GO:0051205">
    <property type="term" value="P:protein insertion into membrane"/>
    <property type="evidence" value="ECO:0007669"/>
    <property type="project" value="TreeGrafter"/>
</dbReference>
<dbReference type="GO" id="GO:0015031">
    <property type="term" value="P:protein transport"/>
    <property type="evidence" value="ECO:0007669"/>
    <property type="project" value="UniProtKB-KW"/>
</dbReference>
<dbReference type="CDD" id="cd20070">
    <property type="entry name" value="5TM_YidC_Alb3"/>
    <property type="match status" value="1"/>
</dbReference>
<dbReference type="HAMAP" id="MF_01811">
    <property type="entry name" value="YidC_type2"/>
    <property type="match status" value="1"/>
</dbReference>
<dbReference type="InterPro" id="IPR001708">
    <property type="entry name" value="YidC/ALB3/OXA1/COX18"/>
</dbReference>
<dbReference type="InterPro" id="IPR028055">
    <property type="entry name" value="YidC/Oxa/ALB_C"/>
</dbReference>
<dbReference type="InterPro" id="IPR023060">
    <property type="entry name" value="YidC/YidC1/YidC2_Firmicutes"/>
</dbReference>
<dbReference type="InterPro" id="IPR047196">
    <property type="entry name" value="YidC_ALB_C"/>
</dbReference>
<dbReference type="NCBIfam" id="TIGR03592">
    <property type="entry name" value="yidC_oxa1_cterm"/>
    <property type="match status" value="1"/>
</dbReference>
<dbReference type="PANTHER" id="PTHR12428:SF65">
    <property type="entry name" value="CYTOCHROME C OXIDASE ASSEMBLY PROTEIN COX18, MITOCHONDRIAL"/>
    <property type="match status" value="1"/>
</dbReference>
<dbReference type="PANTHER" id="PTHR12428">
    <property type="entry name" value="OXA1"/>
    <property type="match status" value="1"/>
</dbReference>
<dbReference type="Pfam" id="PF02096">
    <property type="entry name" value="60KD_IMP"/>
    <property type="match status" value="1"/>
</dbReference>
<dbReference type="PRINTS" id="PR00701">
    <property type="entry name" value="60KDINNERMP"/>
</dbReference>
<dbReference type="PROSITE" id="PS51257">
    <property type="entry name" value="PROKAR_LIPOPROTEIN"/>
    <property type="match status" value="1"/>
</dbReference>
<accession>A7X4S6</accession>
<protein>
    <recommendedName>
        <fullName evidence="1">Membrane protein insertase YidC</fullName>
    </recommendedName>
    <alternativeName>
        <fullName evidence="1">Foldase YidC</fullName>
    </alternativeName>
    <alternativeName>
        <fullName evidence="1">Membrane integrase YidC</fullName>
    </alternativeName>
    <alternativeName>
        <fullName evidence="1">Membrane protein YidC</fullName>
    </alternativeName>
</protein>
<gene>
    <name evidence="1" type="primary">yidC</name>
    <name type="ordered locus">SAHV_2075</name>
</gene>
<name>YIDC_STAA1</name>
<proteinExistence type="inferred from homology"/>
<sequence>MKKKALLPLFLGIMVFLAGCDYSKPEKRSGFFYNTFVDPMKNVLDWLGNNLLNDNYGLAIIILVLVIRIILLPFMLSNYKNSHMMRQKMKVAKPEVEKIQEKVKRARTQEEKMAANQELMQVYKKYDMNPIKSMLGCLPMLIQLPIIMGLYFVLKDQLVDGLFKYPHFLWFDLGRPDIWITIIAGVLYFIQAYVSSKTMPDEQRQMGYMMMVISPIMIIWISLSSASALGLYWSVSAAFLVVQTHFANIYYEKVAKKEVQPFIEAYEREHNGGSNKKGKNTQVVSKKKKK</sequence>
<comment type="function">
    <text evidence="1">Required for the insertion and/or proper folding and/or complex formation of integral membrane proteins into the membrane. Involved in integration of membrane proteins that insert both dependently and independently of the Sec translocase complex, as well as at least some lipoproteins.</text>
</comment>
<comment type="subcellular location">
    <subcellularLocation>
        <location evidence="1">Cell membrane</location>
        <topology evidence="1">Multi-pass membrane protein</topology>
    </subcellularLocation>
</comment>
<comment type="similarity">
    <text evidence="1">Belongs to the OXA1/ALB3/YidC family. Type 2 subfamily.</text>
</comment>